<accession>P80682</accession>
<evidence type="ECO:0000255" key="1">
    <source>
        <dbReference type="PROSITE-ProRule" id="PRU00497"/>
    </source>
</evidence>
<evidence type="ECO:0000269" key="2">
    <source>
    </source>
</evidence>
<name>CUA2B_TENMO</name>
<sequence length="117" mass="12272">GLIGSPVATYAAAPVAVAKTVVADEYDPHPQYQYGYDVQDGLTGDSKSQIESRSGDVVQGSYSLVDPDGTRRTVEYTADPINGFNAVVHREPLVAKAVVAAHAPVVHAAPVAKIAHF</sequence>
<protein>
    <recommendedName>
        <fullName>Larval cuticle protein A2B</fullName>
    </recommendedName>
    <alternativeName>
        <fullName>TM-LCP A2B</fullName>
        <shortName>TM-A2B</shortName>
    </alternativeName>
</protein>
<dbReference type="GO" id="GO:0031012">
    <property type="term" value="C:extracellular matrix"/>
    <property type="evidence" value="ECO:0007669"/>
    <property type="project" value="TreeGrafter"/>
</dbReference>
<dbReference type="GO" id="GO:0005615">
    <property type="term" value="C:extracellular space"/>
    <property type="evidence" value="ECO:0007669"/>
    <property type="project" value="TreeGrafter"/>
</dbReference>
<dbReference type="GO" id="GO:0042302">
    <property type="term" value="F:structural constituent of cuticle"/>
    <property type="evidence" value="ECO:0007669"/>
    <property type="project" value="UniProtKB-KW"/>
</dbReference>
<dbReference type="InterPro" id="IPR031311">
    <property type="entry name" value="CHIT_BIND_RR_consensus"/>
</dbReference>
<dbReference type="InterPro" id="IPR000618">
    <property type="entry name" value="Insect_cuticle"/>
</dbReference>
<dbReference type="InterPro" id="IPR051217">
    <property type="entry name" value="Insect_Cuticle_Struc_Prot"/>
</dbReference>
<dbReference type="PANTHER" id="PTHR12236:SF94">
    <property type="entry name" value="CCP84AA-RELATED"/>
    <property type="match status" value="1"/>
</dbReference>
<dbReference type="PANTHER" id="PTHR12236">
    <property type="entry name" value="STRUCTURAL CONTITUENT OF CUTICLE"/>
    <property type="match status" value="1"/>
</dbReference>
<dbReference type="Pfam" id="PF00379">
    <property type="entry name" value="Chitin_bind_4"/>
    <property type="match status" value="1"/>
</dbReference>
<dbReference type="PRINTS" id="PR00947">
    <property type="entry name" value="CUTICLE"/>
</dbReference>
<dbReference type="PROSITE" id="PS00233">
    <property type="entry name" value="CHIT_BIND_RR_1"/>
    <property type="match status" value="1"/>
</dbReference>
<dbReference type="PROSITE" id="PS51155">
    <property type="entry name" value="CHIT_BIND_RR_2"/>
    <property type="match status" value="1"/>
</dbReference>
<reference key="1">
    <citation type="journal article" date="1997" name="Insect Biochem. Mol. Biol.">
        <title>Sequence studies of proteins from larval and pupal cuticle of the yellow meal worm, Tenebrio molitor.</title>
        <authorList>
            <person name="Andersen S.O."/>
            <person name="Rafn K."/>
            <person name="Roepstorff P."/>
        </authorList>
    </citation>
    <scope>PROTEIN SEQUENCE</scope>
    <scope>MASS SPECTROMETRY</scope>
    <source>
        <tissue>Cuticle</tissue>
    </source>
</reference>
<proteinExistence type="evidence at protein level"/>
<feature type="chain" id="PRO_0000196133" description="Larval cuticle protein A2B">
    <location>
        <begin position="1"/>
        <end position="117"/>
    </location>
</feature>
<feature type="repeat" description="1">
    <location>
        <begin position="12"/>
        <end position="15"/>
    </location>
</feature>
<feature type="domain" description="Chitin-binding type R&amp;R" evidence="1">
    <location>
        <begin position="29"/>
        <end position="95"/>
    </location>
</feature>
<feature type="repeat" description="2">
    <location>
        <begin position="108"/>
        <end position="111"/>
    </location>
</feature>
<keyword id="KW-0193">Cuticle</keyword>
<keyword id="KW-0903">Direct protein sequencing</keyword>
<keyword id="KW-0677">Repeat</keyword>
<comment type="function">
    <text>Component of the cuticle of the larva of Tenebrio molitor.</text>
</comment>
<comment type="domain">
    <text>The tetrapeptide (A-A-P-[AV]) repeats found throughout the protein are also present in many proteins constituting the protective envelope of other species.</text>
</comment>
<comment type="mass spectrometry" mass="12273.0" method="MALDI" evidence="2"/>
<organism>
    <name type="scientific">Tenebrio molitor</name>
    <name type="common">Yellow mealworm beetle</name>
    <dbReference type="NCBI Taxonomy" id="7067"/>
    <lineage>
        <taxon>Eukaryota</taxon>
        <taxon>Metazoa</taxon>
        <taxon>Ecdysozoa</taxon>
        <taxon>Arthropoda</taxon>
        <taxon>Hexapoda</taxon>
        <taxon>Insecta</taxon>
        <taxon>Pterygota</taxon>
        <taxon>Neoptera</taxon>
        <taxon>Endopterygota</taxon>
        <taxon>Coleoptera</taxon>
        <taxon>Polyphaga</taxon>
        <taxon>Cucujiformia</taxon>
        <taxon>Tenebrionidae</taxon>
        <taxon>Tenebrio</taxon>
    </lineage>
</organism>